<keyword id="KW-0963">Cytoplasm</keyword>
<keyword id="KW-0677">Repeat</keyword>
<protein>
    <recommendedName>
        <fullName>Axoneme-associated protein mst101(1)</fullName>
    </recommendedName>
</protein>
<evidence type="ECO:0000250" key="1"/>
<evidence type="ECO:0000256" key="2">
    <source>
        <dbReference type="SAM" id="MobiDB-lite"/>
    </source>
</evidence>
<evidence type="ECO:0000269" key="3">
    <source>
    </source>
</evidence>
<comment type="function">
    <text>Possible structural role in the sperm tail. It is associated with axonemal structures.</text>
</comment>
<comment type="subcellular location">
    <subcellularLocation>
        <location evidence="1">Cytoplasm</location>
    </subcellularLocation>
</comment>
<comment type="tissue specificity">
    <text>Testis. Located in spermatocytes and spermatid bundles.</text>
</comment>
<comment type="domain">
    <text>The predominant structure is alpha-helical.</text>
</comment>
<comment type="polymorphism">
    <text evidence="3">The number of repeats varies between strains.</text>
</comment>
<organism>
    <name type="scientific">Drosophila hydei</name>
    <name type="common">Fruit fly</name>
    <dbReference type="NCBI Taxonomy" id="7224"/>
    <lineage>
        <taxon>Eukaryota</taxon>
        <taxon>Metazoa</taxon>
        <taxon>Ecdysozoa</taxon>
        <taxon>Arthropoda</taxon>
        <taxon>Hexapoda</taxon>
        <taxon>Insecta</taxon>
        <taxon>Pterygota</taxon>
        <taxon>Neoptera</taxon>
        <taxon>Endopterygota</taxon>
        <taxon>Diptera</taxon>
        <taxon>Brachycera</taxon>
        <taxon>Muscomorpha</taxon>
        <taxon>Ephydroidea</taxon>
        <taxon>Drosophilidae</taxon>
        <taxon>Drosophila</taxon>
    </lineage>
</organism>
<accession>Q08695</accession>
<sequence length="344" mass="37793">MSFLSRFVCAVPRQAIFRTFSTLTGSSGCKYLPESTFNTIQKVSFCKKSAKGKDGDLKKKCAEAAKKEKEAAEKKKCAEAAKKEKEAAEKKKCAEAAKKEKEAAEKKKCAEAAKKEKEAAEKKKCAEAAKKEKEAAEKKKCAEAAKKEKEAAEKKKCAEAAKKEKEAAEKKKCAEAAQKKKCAELAKKEQEAAEKKKCAEAAKKEKEAAEKKKCEERAKKEKEAAEKKKCEERAKKEKEAAEKKKCAEAAKKEKEAAEKKKCAEAAQKKKCAELAKKAKEAAEKKKCAKKAGEKGSKQSGSDKGKKNGKKNDMKNKCAMLAKKAKEEALKKKCAAAQKKCEPKK</sequence>
<feature type="chain" id="PRO_0000096604" description="Axoneme-associated protein mst101(1)">
    <location>
        <begin position="1"/>
        <end position="344"/>
    </location>
</feature>
<feature type="repeat" description="1">
    <location>
        <begin position="74"/>
        <end position="89"/>
    </location>
</feature>
<feature type="repeat" description="2">
    <location>
        <begin position="90"/>
        <end position="105"/>
    </location>
</feature>
<feature type="repeat" description="3">
    <location>
        <begin position="106"/>
        <end position="121"/>
    </location>
</feature>
<feature type="repeat" description="4">
    <location>
        <begin position="122"/>
        <end position="137"/>
    </location>
</feature>
<feature type="repeat" description="5">
    <location>
        <begin position="138"/>
        <end position="153"/>
    </location>
</feature>
<feature type="repeat" description="6">
    <location>
        <begin position="154"/>
        <end position="169"/>
    </location>
</feature>
<feature type="repeat" description="7">
    <location>
        <begin position="170"/>
        <end position="185"/>
    </location>
</feature>
<feature type="repeat" description="8">
    <location>
        <begin position="186"/>
        <end position="201"/>
    </location>
</feature>
<feature type="repeat" description="9">
    <location>
        <begin position="202"/>
        <end position="217"/>
    </location>
</feature>
<feature type="repeat" description="10">
    <location>
        <begin position="218"/>
        <end position="233"/>
    </location>
</feature>
<feature type="repeat" description="11">
    <location>
        <begin position="234"/>
        <end position="249"/>
    </location>
</feature>
<feature type="repeat" description="12">
    <location>
        <begin position="250"/>
        <end position="265"/>
    </location>
</feature>
<feature type="repeat" description="13; approximate">
    <location>
        <begin position="266"/>
        <end position="281"/>
    </location>
</feature>
<feature type="repeat" description="14; approximate">
    <location>
        <begin position="282"/>
        <end position="297"/>
    </location>
</feature>
<feature type="repeat" description="15; approximate">
    <location>
        <begin position="298"/>
        <end position="313"/>
    </location>
</feature>
<feature type="repeat" description="16">
    <location>
        <begin position="314"/>
        <end position="329"/>
    </location>
</feature>
<feature type="repeat" description="17; truncated">
    <location>
        <begin position="330"/>
        <end position="344"/>
    </location>
</feature>
<feature type="region of interest" description="17 X 16 AA approximate tandem repeats of K-K-K-C-X-E-X-A-[KQ]-K-X-X-E-X-A-X">
    <location>
        <begin position="74"/>
        <end position="344"/>
    </location>
</feature>
<feature type="region of interest" description="Disordered" evidence="2">
    <location>
        <begin position="206"/>
        <end position="244"/>
    </location>
</feature>
<feature type="region of interest" description="Disordered" evidence="2">
    <location>
        <begin position="285"/>
        <end position="318"/>
    </location>
</feature>
<feature type="compositionally biased region" description="Basic and acidic residues" evidence="2">
    <location>
        <begin position="285"/>
        <end position="315"/>
    </location>
</feature>
<reference key="1">
    <citation type="journal article" date="1994" name="Dev. Biol.">
        <title>The Drosophila hydei gene Dhmst101(1) encodes a testis-specific, repetitive, axoneme-associated protein with differential abundance in Y chromosomal deletion mutant flies.</title>
        <authorList>
            <person name="Neesen J."/>
            <person name="Buenemann H."/>
            <person name="Heinlein U.A.O."/>
        </authorList>
    </citation>
    <scope>NUCLEOTIDE SEQUENCE [MRNA]</scope>
    <scope>CHARACTERIZATION</scope>
    <scope>POLYMORPHISM</scope>
    <source>
        <tissue>Testis</tissue>
    </source>
</reference>
<name>MST1_DROHY</name>
<dbReference type="EMBL" id="X73480">
    <property type="protein sequence ID" value="CAA51875.1"/>
    <property type="molecule type" value="mRNA"/>
</dbReference>
<dbReference type="PIR" id="S34153">
    <property type="entry name" value="S34153"/>
</dbReference>
<dbReference type="SMR" id="Q08695"/>
<dbReference type="EnsemblMetazoa" id="XM_023309244.2">
    <property type="protein sequence ID" value="XP_023165012.2"/>
    <property type="gene ID" value="LOC111595477"/>
</dbReference>
<dbReference type="OrthoDB" id="7872834at2759"/>
<dbReference type="Proteomes" id="UP000504633">
    <property type="component" value="Unplaced"/>
</dbReference>
<dbReference type="GO" id="GO:0005737">
    <property type="term" value="C:cytoplasm"/>
    <property type="evidence" value="ECO:0000314"/>
    <property type="project" value="UniProtKB"/>
</dbReference>
<dbReference type="GO" id="GO:0007288">
    <property type="term" value="P:sperm axoneme assembly"/>
    <property type="evidence" value="ECO:0000270"/>
    <property type="project" value="UniProtKB"/>
</dbReference>
<proteinExistence type="evidence at protein level"/>
<gene>
    <name type="primary">mst101(1)</name>
</gene>